<protein>
    <recommendedName>
        <fullName evidence="3">MSDIN-like toxin proprotein 2</fullName>
    </recommendedName>
    <component>
        <recommendedName>
            <fullName evidence="3">Toxin MSD2</fullName>
        </recommendedName>
    </component>
</protein>
<organism>
    <name type="scientific">Amanita exitialis</name>
    <name type="common">Guangzhou destroying angel</name>
    <dbReference type="NCBI Taxonomy" id="262245"/>
    <lineage>
        <taxon>Eukaryota</taxon>
        <taxon>Fungi</taxon>
        <taxon>Dikarya</taxon>
        <taxon>Basidiomycota</taxon>
        <taxon>Agaricomycotina</taxon>
        <taxon>Agaricomycetes</taxon>
        <taxon>Agaricomycetidae</taxon>
        <taxon>Agaricales</taxon>
        <taxon>Pluteineae</taxon>
        <taxon>Amanitaceae</taxon>
        <taxon>Amanita</taxon>
    </lineage>
</organism>
<sequence>MSDINATRLPIIWAPVVPCISDDNDSTLTRGQR</sequence>
<dbReference type="EMBL" id="KF387491">
    <property type="protein sequence ID" value="AGW83715.1"/>
    <property type="molecule type" value="mRNA"/>
</dbReference>
<dbReference type="GO" id="GO:0090729">
    <property type="term" value="F:toxin activity"/>
    <property type="evidence" value="ECO:0007669"/>
    <property type="project" value="UniProtKB-KW"/>
</dbReference>
<dbReference type="InterPro" id="IPR027582">
    <property type="entry name" value="Amanitin/phalloidin"/>
</dbReference>
<dbReference type="NCBIfam" id="TIGR04309">
    <property type="entry name" value="amanitin"/>
    <property type="match status" value="1"/>
</dbReference>
<accession>U5L409</accession>
<name>MSD2_AMAEX</name>
<reference key="1">
    <citation type="journal article" date="2013" name="Gene">
        <title>Illumina-based de novo transcriptome sequencing and analysis of Amanita exitialis basidiocarps.</title>
        <authorList>
            <person name="Li P."/>
            <person name="Deng W.Q."/>
            <person name="Li T.H."/>
            <person name="Song B."/>
            <person name="Shen Y.H."/>
        </authorList>
    </citation>
    <scope>NUCLEOTIDE SEQUENCE [MRNA]</scope>
    <scope>FUNCTION</scope>
    <scope>TISSUE SPECIFICITY</scope>
</reference>
<feature type="propeptide" id="PRO_0000443758" evidence="5">
    <location>
        <begin position="1"/>
        <end position="10"/>
    </location>
</feature>
<feature type="peptide" id="PRO_0000443759" description="Toxin MSD2" evidence="5">
    <location>
        <begin position="11"/>
        <end position="18"/>
    </location>
</feature>
<feature type="propeptide" id="PRO_0000443760" evidence="5">
    <location>
        <begin position="19"/>
        <end position="33"/>
    </location>
</feature>
<feature type="cross-link" description="Cyclopeptide (Ile-Pro)" evidence="5">
    <location>
        <begin position="11"/>
        <end position="18"/>
    </location>
</feature>
<keyword id="KW-0800">Toxin</keyword>
<evidence type="ECO:0000250" key="1">
    <source>
        <dbReference type="UniProtKB" id="A0A067SLB9"/>
    </source>
</evidence>
<evidence type="ECO:0000269" key="2">
    <source>
    </source>
</evidence>
<evidence type="ECO:0000303" key="3">
    <source>
    </source>
</evidence>
<evidence type="ECO:0000305" key="4"/>
<evidence type="ECO:0000305" key="5">
    <source>
    </source>
</evidence>
<comment type="function">
    <text evidence="5">Probable toxin that belongs to the MSDIN-like toxin family responsible for a large number of food poisoning cases and deaths (PubMed:24050899).</text>
</comment>
<comment type="tissue specificity">
    <text evidence="2">Expressed in basidiocarps (PubMed:24050899).</text>
</comment>
<comment type="PTM">
    <text evidence="1">Processed by the macrocyclase-peptidase enzyme POPB to yield a toxic cyclic octapeptide (By similarity). POPB first removes 10 residues from the N-terminus (By similarity). Conformational trapping of the remaining peptide forces the enzyme to release this intermediate rather than proceed to macrocyclization (By similarity). The enzyme rebinds the remaining peptide in a different conformation and catalyzes macrocyclization of the N-terminal 8 residues (By similarity).</text>
</comment>
<comment type="similarity">
    <text evidence="4">Belongs to the MSDIN fungal toxin family.</text>
</comment>
<proteinExistence type="evidence at transcript level"/>